<sequence>MQVFHHIRSLREALAAERRAGKRIGFVPTMGNLHDAHIELVRIAQRNCDVVVTSIFVNPLQFGLNEDWDKYPRTLAADSAKLEAVHCDYLFCPDETEIYPNGMAEQTRVIVPTMIDVLCGASRPGHFEGVTTVVTKLFNIVQPDEAVFGVKDFQQLAVIRRMVQDLCIPVKIVAGDIVREPDGLAMSSRNGFITADERPHVAVLNRVLNGIKQQIEQGSRDFGTLAAEARAHIDAAGFRVDYVSICNSRTLEMAAHDDREITILGAMYTSGARLIDNVSVVLA</sequence>
<proteinExistence type="inferred from homology"/>
<feature type="chain" id="PRO_1000097044" description="Pantothenate synthetase">
    <location>
        <begin position="1"/>
        <end position="283"/>
    </location>
</feature>
<feature type="active site" description="Proton donor" evidence="1">
    <location>
        <position position="37"/>
    </location>
</feature>
<feature type="binding site" evidence="1">
    <location>
        <begin position="30"/>
        <end position="37"/>
    </location>
    <ligand>
        <name>ATP</name>
        <dbReference type="ChEBI" id="CHEBI:30616"/>
    </ligand>
</feature>
<feature type="binding site" evidence="1">
    <location>
        <position position="61"/>
    </location>
    <ligand>
        <name>(R)-pantoate</name>
        <dbReference type="ChEBI" id="CHEBI:15980"/>
    </ligand>
</feature>
<feature type="binding site" evidence="1">
    <location>
        <position position="61"/>
    </location>
    <ligand>
        <name>beta-alanine</name>
        <dbReference type="ChEBI" id="CHEBI:57966"/>
    </ligand>
</feature>
<feature type="binding site" evidence="1">
    <location>
        <begin position="149"/>
        <end position="152"/>
    </location>
    <ligand>
        <name>ATP</name>
        <dbReference type="ChEBI" id="CHEBI:30616"/>
    </ligand>
</feature>
<feature type="binding site" evidence="1">
    <location>
        <position position="155"/>
    </location>
    <ligand>
        <name>(R)-pantoate</name>
        <dbReference type="ChEBI" id="CHEBI:15980"/>
    </ligand>
</feature>
<feature type="binding site" evidence="1">
    <location>
        <position position="178"/>
    </location>
    <ligand>
        <name>ATP</name>
        <dbReference type="ChEBI" id="CHEBI:30616"/>
    </ligand>
</feature>
<feature type="binding site" evidence="1">
    <location>
        <begin position="186"/>
        <end position="189"/>
    </location>
    <ligand>
        <name>ATP</name>
        <dbReference type="ChEBI" id="CHEBI:30616"/>
    </ligand>
</feature>
<evidence type="ECO:0000255" key="1">
    <source>
        <dbReference type="HAMAP-Rule" id="MF_00158"/>
    </source>
</evidence>
<dbReference type="EC" id="6.3.2.1" evidence="1"/>
<dbReference type="EMBL" id="CP000934">
    <property type="protein sequence ID" value="ACE84335.1"/>
    <property type="molecule type" value="Genomic_DNA"/>
</dbReference>
<dbReference type="RefSeq" id="WP_012488556.1">
    <property type="nucleotide sequence ID" value="NC_010995.1"/>
</dbReference>
<dbReference type="SMR" id="B3PCR5"/>
<dbReference type="STRING" id="498211.CJA_2975"/>
<dbReference type="KEGG" id="cja:CJA_2975"/>
<dbReference type="eggNOG" id="COG0414">
    <property type="taxonomic scope" value="Bacteria"/>
</dbReference>
<dbReference type="HOGENOM" id="CLU_047148_0_0_6"/>
<dbReference type="OrthoDB" id="9773087at2"/>
<dbReference type="UniPathway" id="UPA00028">
    <property type="reaction ID" value="UER00005"/>
</dbReference>
<dbReference type="Proteomes" id="UP000001036">
    <property type="component" value="Chromosome"/>
</dbReference>
<dbReference type="GO" id="GO:0005829">
    <property type="term" value="C:cytosol"/>
    <property type="evidence" value="ECO:0007669"/>
    <property type="project" value="TreeGrafter"/>
</dbReference>
<dbReference type="GO" id="GO:0005524">
    <property type="term" value="F:ATP binding"/>
    <property type="evidence" value="ECO:0007669"/>
    <property type="project" value="UniProtKB-KW"/>
</dbReference>
<dbReference type="GO" id="GO:0004592">
    <property type="term" value="F:pantoate-beta-alanine ligase activity"/>
    <property type="evidence" value="ECO:0007669"/>
    <property type="project" value="UniProtKB-UniRule"/>
</dbReference>
<dbReference type="GO" id="GO:0015940">
    <property type="term" value="P:pantothenate biosynthetic process"/>
    <property type="evidence" value="ECO:0007669"/>
    <property type="project" value="UniProtKB-UniRule"/>
</dbReference>
<dbReference type="CDD" id="cd00560">
    <property type="entry name" value="PanC"/>
    <property type="match status" value="1"/>
</dbReference>
<dbReference type="FunFam" id="3.40.50.620:FF:000013">
    <property type="entry name" value="Pantothenate synthetase"/>
    <property type="match status" value="1"/>
</dbReference>
<dbReference type="Gene3D" id="3.40.50.620">
    <property type="entry name" value="HUPs"/>
    <property type="match status" value="1"/>
</dbReference>
<dbReference type="Gene3D" id="3.30.1300.10">
    <property type="entry name" value="Pantoate-beta-alanine ligase, C-terminal domain"/>
    <property type="match status" value="1"/>
</dbReference>
<dbReference type="HAMAP" id="MF_00158">
    <property type="entry name" value="PanC"/>
    <property type="match status" value="1"/>
</dbReference>
<dbReference type="InterPro" id="IPR003721">
    <property type="entry name" value="Pantoate_ligase"/>
</dbReference>
<dbReference type="InterPro" id="IPR042176">
    <property type="entry name" value="Pantoate_ligase_C"/>
</dbReference>
<dbReference type="InterPro" id="IPR014729">
    <property type="entry name" value="Rossmann-like_a/b/a_fold"/>
</dbReference>
<dbReference type="NCBIfam" id="TIGR00018">
    <property type="entry name" value="panC"/>
    <property type="match status" value="1"/>
</dbReference>
<dbReference type="PANTHER" id="PTHR21299">
    <property type="entry name" value="CYTIDYLATE KINASE/PANTOATE-BETA-ALANINE LIGASE"/>
    <property type="match status" value="1"/>
</dbReference>
<dbReference type="PANTHER" id="PTHR21299:SF1">
    <property type="entry name" value="PANTOATE--BETA-ALANINE LIGASE"/>
    <property type="match status" value="1"/>
</dbReference>
<dbReference type="Pfam" id="PF02569">
    <property type="entry name" value="Pantoate_ligase"/>
    <property type="match status" value="1"/>
</dbReference>
<dbReference type="SUPFAM" id="SSF52374">
    <property type="entry name" value="Nucleotidylyl transferase"/>
    <property type="match status" value="1"/>
</dbReference>
<gene>
    <name evidence="1" type="primary">panC</name>
    <name type="ordered locus">CJA_2975</name>
</gene>
<protein>
    <recommendedName>
        <fullName evidence="1">Pantothenate synthetase</fullName>
        <shortName evidence="1">PS</shortName>
        <ecNumber evidence="1">6.3.2.1</ecNumber>
    </recommendedName>
    <alternativeName>
        <fullName evidence="1">Pantoate--beta-alanine ligase</fullName>
    </alternativeName>
    <alternativeName>
        <fullName evidence="1">Pantoate-activating enzyme</fullName>
    </alternativeName>
</protein>
<accession>B3PCR5</accession>
<name>PANC_CELJU</name>
<organism>
    <name type="scientific">Cellvibrio japonicus (strain Ueda107)</name>
    <name type="common">Pseudomonas fluorescens subsp. cellulosa</name>
    <dbReference type="NCBI Taxonomy" id="498211"/>
    <lineage>
        <taxon>Bacteria</taxon>
        <taxon>Pseudomonadati</taxon>
        <taxon>Pseudomonadota</taxon>
        <taxon>Gammaproteobacteria</taxon>
        <taxon>Cellvibrionales</taxon>
        <taxon>Cellvibrionaceae</taxon>
        <taxon>Cellvibrio</taxon>
    </lineage>
</organism>
<comment type="function">
    <text evidence="1">Catalyzes the condensation of pantoate with beta-alanine in an ATP-dependent reaction via a pantoyl-adenylate intermediate.</text>
</comment>
<comment type="catalytic activity">
    <reaction evidence="1">
        <text>(R)-pantoate + beta-alanine + ATP = (R)-pantothenate + AMP + diphosphate + H(+)</text>
        <dbReference type="Rhea" id="RHEA:10912"/>
        <dbReference type="ChEBI" id="CHEBI:15378"/>
        <dbReference type="ChEBI" id="CHEBI:15980"/>
        <dbReference type="ChEBI" id="CHEBI:29032"/>
        <dbReference type="ChEBI" id="CHEBI:30616"/>
        <dbReference type="ChEBI" id="CHEBI:33019"/>
        <dbReference type="ChEBI" id="CHEBI:57966"/>
        <dbReference type="ChEBI" id="CHEBI:456215"/>
        <dbReference type="EC" id="6.3.2.1"/>
    </reaction>
</comment>
<comment type="pathway">
    <text evidence="1">Cofactor biosynthesis; (R)-pantothenate biosynthesis; (R)-pantothenate from (R)-pantoate and beta-alanine: step 1/1.</text>
</comment>
<comment type="subunit">
    <text evidence="1">Homodimer.</text>
</comment>
<comment type="subcellular location">
    <subcellularLocation>
        <location evidence="1">Cytoplasm</location>
    </subcellularLocation>
</comment>
<comment type="miscellaneous">
    <text evidence="1">The reaction proceeds by a bi uni uni bi ping pong mechanism.</text>
</comment>
<comment type="similarity">
    <text evidence="1">Belongs to the pantothenate synthetase family.</text>
</comment>
<reference key="1">
    <citation type="journal article" date="2008" name="J. Bacteriol.">
        <title>Insights into plant cell wall degradation from the genome sequence of the soil bacterium Cellvibrio japonicus.</title>
        <authorList>
            <person name="DeBoy R.T."/>
            <person name="Mongodin E.F."/>
            <person name="Fouts D.E."/>
            <person name="Tailford L.E."/>
            <person name="Khouri H."/>
            <person name="Emerson J.B."/>
            <person name="Mohamoud Y."/>
            <person name="Watkins K."/>
            <person name="Henrissat B."/>
            <person name="Gilbert H.J."/>
            <person name="Nelson K.E."/>
        </authorList>
    </citation>
    <scope>NUCLEOTIDE SEQUENCE [LARGE SCALE GENOMIC DNA]</scope>
    <source>
        <strain>Ueda107</strain>
    </source>
</reference>
<keyword id="KW-0067">ATP-binding</keyword>
<keyword id="KW-0963">Cytoplasm</keyword>
<keyword id="KW-0436">Ligase</keyword>
<keyword id="KW-0547">Nucleotide-binding</keyword>
<keyword id="KW-0566">Pantothenate biosynthesis</keyword>
<keyword id="KW-1185">Reference proteome</keyword>